<protein>
    <recommendedName>
        <fullName>Transmembrane protein 169</fullName>
    </recommendedName>
</protein>
<comment type="subcellular location">
    <subcellularLocation>
        <location evidence="3">Membrane</location>
        <topology evidence="3">Multi-pass membrane protein</topology>
    </subcellularLocation>
</comment>
<reference key="1">
    <citation type="submission" date="2005-11" db="EMBL/GenBank/DDBJ databases">
        <authorList>
            <consortium name="NIH - Mammalian Gene Collection (MGC) project"/>
        </authorList>
    </citation>
    <scope>NUCLEOTIDE SEQUENCE [LARGE SCALE MRNA]</scope>
    <source>
        <strain>Crossbred X Angus</strain>
        <tissue>Liver</tissue>
    </source>
</reference>
<organism>
    <name type="scientific">Bos taurus</name>
    <name type="common">Bovine</name>
    <dbReference type="NCBI Taxonomy" id="9913"/>
    <lineage>
        <taxon>Eukaryota</taxon>
        <taxon>Metazoa</taxon>
        <taxon>Chordata</taxon>
        <taxon>Craniata</taxon>
        <taxon>Vertebrata</taxon>
        <taxon>Euteleostomi</taxon>
        <taxon>Mammalia</taxon>
        <taxon>Eutheria</taxon>
        <taxon>Laurasiatheria</taxon>
        <taxon>Artiodactyla</taxon>
        <taxon>Ruminantia</taxon>
        <taxon>Pecora</taxon>
        <taxon>Bovidae</taxon>
        <taxon>Bovinae</taxon>
        <taxon>Bos</taxon>
    </lineage>
</organism>
<feature type="chain" id="PRO_0000271038" description="Transmembrane protein 169">
    <location>
        <begin position="1"/>
        <end position="297"/>
    </location>
</feature>
<feature type="topological domain" description="Extracellular" evidence="1">
    <location>
        <begin position="1"/>
        <end position="159"/>
    </location>
</feature>
<feature type="transmembrane region" description="Helical" evidence="1">
    <location>
        <begin position="160"/>
        <end position="180"/>
    </location>
</feature>
<feature type="topological domain" description="Cytoplasmic" evidence="1">
    <location>
        <begin position="181"/>
        <end position="210"/>
    </location>
</feature>
<feature type="transmembrane region" description="Helical" evidence="1">
    <location>
        <begin position="211"/>
        <end position="231"/>
    </location>
</feature>
<feature type="topological domain" description="Extracellular" evidence="1">
    <location>
        <begin position="232"/>
        <end position="297"/>
    </location>
</feature>
<feature type="region of interest" description="Disordered" evidence="2">
    <location>
        <begin position="1"/>
        <end position="84"/>
    </location>
</feature>
<feature type="compositionally biased region" description="Polar residues" evidence="2">
    <location>
        <begin position="9"/>
        <end position="18"/>
    </location>
</feature>
<feature type="compositionally biased region" description="Acidic residues" evidence="2">
    <location>
        <begin position="60"/>
        <end position="84"/>
    </location>
</feature>
<keyword id="KW-0472">Membrane</keyword>
<keyword id="KW-1185">Reference proteome</keyword>
<keyword id="KW-0812">Transmembrane</keyword>
<keyword id="KW-1133">Transmembrane helix</keyword>
<name>TM169_BOVIN</name>
<evidence type="ECO:0000255" key="1"/>
<evidence type="ECO:0000256" key="2">
    <source>
        <dbReference type="SAM" id="MobiDB-lite"/>
    </source>
</evidence>
<evidence type="ECO:0000305" key="3"/>
<dbReference type="EMBL" id="BC110238">
    <property type="protein sequence ID" value="AAI10239.1"/>
    <property type="molecule type" value="mRNA"/>
</dbReference>
<dbReference type="RefSeq" id="NP_001033779.1">
    <property type="nucleotide sequence ID" value="NM_001038690.2"/>
</dbReference>
<dbReference type="RefSeq" id="XP_005202845.1">
    <property type="nucleotide sequence ID" value="XM_005202788.4"/>
</dbReference>
<dbReference type="RefSeq" id="XP_005202846.1">
    <property type="nucleotide sequence ID" value="XM_005202789.4"/>
</dbReference>
<dbReference type="RefSeq" id="XP_010800594.1">
    <property type="nucleotide sequence ID" value="XM_010802292.1"/>
</dbReference>
<dbReference type="RefSeq" id="XP_024833838.1">
    <property type="nucleotide sequence ID" value="XM_024978070.2"/>
</dbReference>
<dbReference type="FunCoup" id="Q2TBG9">
    <property type="interactions" value="344"/>
</dbReference>
<dbReference type="STRING" id="9913.ENSBTAP00000013741"/>
<dbReference type="PaxDb" id="9913-ENSBTAP00000013741"/>
<dbReference type="Ensembl" id="ENSBTAT00000013741.5">
    <property type="protein sequence ID" value="ENSBTAP00000013741.3"/>
    <property type="gene ID" value="ENSBTAG00000010413.5"/>
</dbReference>
<dbReference type="GeneID" id="617045"/>
<dbReference type="KEGG" id="bta:617045"/>
<dbReference type="CTD" id="92691"/>
<dbReference type="VEuPathDB" id="HostDB:ENSBTAG00000010413"/>
<dbReference type="VGNC" id="VGNC:35994">
    <property type="gene designation" value="TMEM169"/>
</dbReference>
<dbReference type="eggNOG" id="ENOG502QUD9">
    <property type="taxonomic scope" value="Eukaryota"/>
</dbReference>
<dbReference type="GeneTree" id="ENSGT00390000015276"/>
<dbReference type="HOGENOM" id="CLU_082140_0_0_1"/>
<dbReference type="InParanoid" id="Q2TBG9"/>
<dbReference type="OMA" id="AFSEWWQ"/>
<dbReference type="TreeFam" id="TF323682"/>
<dbReference type="Proteomes" id="UP000009136">
    <property type="component" value="Chromosome 2"/>
</dbReference>
<dbReference type="Bgee" id="ENSBTAG00000010413">
    <property type="expression patterns" value="Expressed in semen and 74 other cell types or tissues"/>
</dbReference>
<dbReference type="GO" id="GO:0016020">
    <property type="term" value="C:membrane"/>
    <property type="evidence" value="ECO:0007669"/>
    <property type="project" value="UniProtKB-SubCell"/>
</dbReference>
<dbReference type="InterPro" id="IPR029386">
    <property type="entry name" value="TMEM169"/>
</dbReference>
<dbReference type="PANTHER" id="PTHR31777">
    <property type="entry name" value="TRANSMEMBRANE PROTEIN 169"/>
    <property type="match status" value="1"/>
</dbReference>
<dbReference type="PANTHER" id="PTHR31777:SF0">
    <property type="entry name" value="TRANSMEMBRANE PROTEIN 169"/>
    <property type="match status" value="1"/>
</dbReference>
<dbReference type="Pfam" id="PF15052">
    <property type="entry name" value="TMEM169"/>
    <property type="match status" value="1"/>
</dbReference>
<gene>
    <name type="primary">TMEM169</name>
</gene>
<accession>Q2TBG9</accession>
<proteinExistence type="evidence at transcript level"/>
<sequence>MEEPALVEGQSQLPSPHHNSLRKAMAAALVLDGESTMGRRKKKKKESRPESIIIYRSESETLDEEPGESEGGDQPKEEEGDDFIDYPMDDGVWNVPVDSRYVTLTGTITRGKKKGQMVDIHVTLTEKELQELTKPKASSRETTPGGRKACQLGADRGPHVVLWTLVCLPVVFLLSFVVSFYYGTITWYNIFLVYNEERTFWHKISCCPCLILCYPVLIMAMASSLGLYAAVVQLSWSWEAWWQAARDMEKGFCGWLCSKLGLEDCSPYSIVELLESDNISGNLSNKDATQEIETSAV</sequence>